<accession>Q9N2H9</accession>
<organism>
    <name type="scientific">Sus scrofa</name>
    <name type="common">Pig</name>
    <dbReference type="NCBI Taxonomy" id="9823"/>
    <lineage>
        <taxon>Eukaryota</taxon>
        <taxon>Metazoa</taxon>
        <taxon>Chordata</taxon>
        <taxon>Craniata</taxon>
        <taxon>Vertebrata</taxon>
        <taxon>Euteleostomi</taxon>
        <taxon>Mammalia</taxon>
        <taxon>Eutheria</taxon>
        <taxon>Laurasiatheria</taxon>
        <taxon>Artiodactyla</taxon>
        <taxon>Suina</taxon>
        <taxon>Suidae</taxon>
        <taxon>Sus</taxon>
    </lineage>
</organism>
<keyword id="KW-0051">Antiviral defense</keyword>
<keyword id="KW-0202">Cytokine</keyword>
<keyword id="KW-1015">Disulfide bond</keyword>
<keyword id="KW-0391">Immunity</keyword>
<keyword id="KW-0395">Inflammatory response</keyword>
<keyword id="KW-0399">Innate immunity</keyword>
<keyword id="KW-1185">Reference proteome</keyword>
<keyword id="KW-0964">Secreted</keyword>
<keyword id="KW-0732">Signal</keyword>
<keyword id="KW-0797">Tissue remodeling</keyword>
<protein>
    <recommendedName>
        <fullName>Interleukin-23 subunit alpha</fullName>
        <shortName>IL-23 subunit alpha</shortName>
        <shortName>IL-23-A</shortName>
    </recommendedName>
    <alternativeName>
        <fullName>Interleukin-23 subunit p19</fullName>
        <shortName>IL-23p19</shortName>
    </alternativeName>
</protein>
<comment type="function">
    <text evidence="2">Associates with IL12B to form the pro-inflammatory cytokine IL-23 that plays different roles in innate and adaptive immunity. Released by antigen-presenting cells such as dendritic cells or macrophages, binds to a heterodimeric receptor complex composed of IL12RB1 and IL23R to activate JAK2 and TYK2 which then phosphorylate the receptor to form a docking site leading to the phosphorylation of STAT3 and STAT4. This process leads to activation of several pathways including p38 MAPK or NF-kappa-B and promotes the production of pro-inflammatory cytokines such as interleukin-17A/IL17A. In turn, participates in the early and effective intracellular bacterial clearance. Promotes the expansion and survival of T-helper 17 cells, a CD4-positive helper T-cell subset that produces IL-17, as well as other IL-17-producing cells.</text>
</comment>
<comment type="subunit">
    <text evidence="2">Heterodimer with IL12B; disulfide-linked. The heterodimer is known as interleukin IL-23. Interacts with IL23R; this interaction enables recruitment of IL12RB1.</text>
</comment>
<comment type="subcellular location">
    <subcellularLocation>
        <location evidence="1">Secreted</location>
    </subcellularLocation>
    <text evidence="1">Secreted upon association with IL12B.</text>
</comment>
<comment type="similarity">
    <text evidence="4">Belongs to the IL-6 superfamily.</text>
</comment>
<dbReference type="EMBL" id="AB030002">
    <property type="protein sequence ID" value="BAA93688.1"/>
    <property type="molecule type" value="Genomic_DNA"/>
</dbReference>
<dbReference type="RefSeq" id="NP_001123708.1">
    <property type="nucleotide sequence ID" value="NM_001130236.1"/>
</dbReference>
<dbReference type="SMR" id="Q9N2H9"/>
<dbReference type="FunCoup" id="Q9N2H9">
    <property type="interactions" value="96"/>
</dbReference>
<dbReference type="STRING" id="9823.ENSSSCP00000039363"/>
<dbReference type="Ensembl" id="ENSSSCT00000047550.2">
    <property type="protein sequence ID" value="ENSSSCP00000039363.1"/>
    <property type="gene ID" value="ENSSSCG00000033520.2"/>
</dbReference>
<dbReference type="Ensembl" id="ENSSSCT00015102848.1">
    <property type="protein sequence ID" value="ENSSSCP00015042770.1"/>
    <property type="gene ID" value="ENSSSCG00015076163.1"/>
</dbReference>
<dbReference type="Ensembl" id="ENSSSCT00025045106.1">
    <property type="protein sequence ID" value="ENSSSCP00025019215.1"/>
    <property type="gene ID" value="ENSSSCG00025033168.1"/>
</dbReference>
<dbReference type="Ensembl" id="ENSSSCT00030042027.1">
    <property type="protein sequence ID" value="ENSSSCP00030019113.1"/>
    <property type="gene ID" value="ENSSSCG00030030253.1"/>
</dbReference>
<dbReference type="Ensembl" id="ENSSSCT00035012004.1">
    <property type="protein sequence ID" value="ENSSSCP00035004090.1"/>
    <property type="gene ID" value="ENSSSCG00035009567.1"/>
</dbReference>
<dbReference type="Ensembl" id="ENSSSCT00040006505.1">
    <property type="protein sequence ID" value="ENSSSCP00040002598.1"/>
    <property type="gene ID" value="ENSSSCG00040004892.1"/>
</dbReference>
<dbReference type="Ensembl" id="ENSSSCT00045039391.1">
    <property type="protein sequence ID" value="ENSSSCP00045027405.1"/>
    <property type="gene ID" value="ENSSSCG00045023071.1"/>
</dbReference>
<dbReference type="Ensembl" id="ENSSSCT00050093136.1">
    <property type="protein sequence ID" value="ENSSSCP00050040184.1"/>
    <property type="gene ID" value="ENSSSCG00050068256.1"/>
</dbReference>
<dbReference type="Ensembl" id="ENSSSCT00055022222.1">
    <property type="protein sequence ID" value="ENSSSCP00055017610.1"/>
    <property type="gene ID" value="ENSSSCG00055011309.1"/>
</dbReference>
<dbReference type="Ensembl" id="ENSSSCT00060108143.1">
    <property type="protein sequence ID" value="ENSSSCP00060048133.1"/>
    <property type="gene ID" value="ENSSSCG00060078317.1"/>
</dbReference>
<dbReference type="Ensembl" id="ENSSSCT00065088154.1">
    <property type="protein sequence ID" value="ENSSSCP00065038572.1"/>
    <property type="gene ID" value="ENSSSCG00065064201.1"/>
</dbReference>
<dbReference type="Ensembl" id="ENSSSCT00070059332.1">
    <property type="protein sequence ID" value="ENSSSCP00070050521.1"/>
    <property type="gene ID" value="ENSSSCG00070029520.1"/>
</dbReference>
<dbReference type="Ensembl" id="ENSSSCT00085008554">
    <property type="protein sequence ID" value="ENSSSCP00085006122"/>
    <property type="gene ID" value="ENSSSCG00085004624"/>
</dbReference>
<dbReference type="Ensembl" id="ENSSSCT00090021886">
    <property type="protein sequence ID" value="ENSSSCP00090013407"/>
    <property type="gene ID" value="ENSSSCG00090012470"/>
</dbReference>
<dbReference type="Ensembl" id="ENSSSCT00105077536">
    <property type="protein sequence ID" value="ENSSSCP00105054854"/>
    <property type="gene ID" value="ENSSSCG00105040691"/>
</dbReference>
<dbReference type="Ensembl" id="ENSSSCT00110072013">
    <property type="protein sequence ID" value="ENSSSCP00110050711"/>
    <property type="gene ID" value="ENSSSCG00110037855"/>
</dbReference>
<dbReference type="Ensembl" id="ENSSSCT00115031393">
    <property type="protein sequence ID" value="ENSSSCP00115029848"/>
    <property type="gene ID" value="ENSSSCG00115017730"/>
</dbReference>
<dbReference type="Ensembl" id="ENSSSCT00130034951">
    <property type="protein sequence ID" value="ENSSSCP00130017305"/>
    <property type="gene ID" value="ENSSSCG00130017907"/>
</dbReference>
<dbReference type="GeneID" id="100155546"/>
<dbReference type="KEGG" id="ssc:100155546"/>
<dbReference type="CTD" id="51561"/>
<dbReference type="VGNC" id="VGNC:89099">
    <property type="gene designation" value="IL23A"/>
</dbReference>
<dbReference type="GeneTree" id="ENSGT00390000006482"/>
<dbReference type="InParanoid" id="Q9N2H9"/>
<dbReference type="OMA" id="IRCSDAC"/>
<dbReference type="OrthoDB" id="9447007at2759"/>
<dbReference type="Reactome" id="R-SSC-9020933">
    <property type="pathway name" value="Interleukin-23 signaling"/>
</dbReference>
<dbReference type="Proteomes" id="UP000008227">
    <property type="component" value="Chromosome 5"/>
</dbReference>
<dbReference type="Proteomes" id="UP000314985">
    <property type="component" value="Chromosome 5"/>
</dbReference>
<dbReference type="Proteomes" id="UP000694570">
    <property type="component" value="Unplaced"/>
</dbReference>
<dbReference type="Proteomes" id="UP000694571">
    <property type="component" value="Unplaced"/>
</dbReference>
<dbReference type="Proteomes" id="UP000694720">
    <property type="component" value="Unplaced"/>
</dbReference>
<dbReference type="Proteomes" id="UP000694722">
    <property type="component" value="Unplaced"/>
</dbReference>
<dbReference type="Proteomes" id="UP000694723">
    <property type="component" value="Unplaced"/>
</dbReference>
<dbReference type="Proteomes" id="UP000694724">
    <property type="component" value="Unplaced"/>
</dbReference>
<dbReference type="Proteomes" id="UP000694725">
    <property type="component" value="Unplaced"/>
</dbReference>
<dbReference type="Proteomes" id="UP000694726">
    <property type="component" value="Unplaced"/>
</dbReference>
<dbReference type="Proteomes" id="UP000694727">
    <property type="component" value="Unplaced"/>
</dbReference>
<dbReference type="Proteomes" id="UP000694728">
    <property type="component" value="Unplaced"/>
</dbReference>
<dbReference type="Bgee" id="ENSSSCG00000033520">
    <property type="expression patterns" value="Expressed in granulosa cell and 11 other cell types or tissues"/>
</dbReference>
<dbReference type="ExpressionAtlas" id="Q9N2H9">
    <property type="expression patterns" value="differential"/>
</dbReference>
<dbReference type="GO" id="GO:0070743">
    <property type="term" value="C:interleukin-23 complex"/>
    <property type="evidence" value="ECO:0000318"/>
    <property type="project" value="GO_Central"/>
</dbReference>
<dbReference type="GO" id="GO:0005125">
    <property type="term" value="F:cytokine activity"/>
    <property type="evidence" value="ECO:0007669"/>
    <property type="project" value="UniProtKB-KW"/>
</dbReference>
<dbReference type="GO" id="GO:0045519">
    <property type="term" value="F:interleukin-23 receptor binding"/>
    <property type="evidence" value="ECO:0007669"/>
    <property type="project" value="Ensembl"/>
</dbReference>
<dbReference type="GO" id="GO:0007259">
    <property type="term" value="P:cell surface receptor signaling pathway via JAK-STAT"/>
    <property type="evidence" value="ECO:0007669"/>
    <property type="project" value="Ensembl"/>
</dbReference>
<dbReference type="GO" id="GO:0050829">
    <property type="term" value="P:defense response to Gram-negative bacterium"/>
    <property type="evidence" value="ECO:0007669"/>
    <property type="project" value="Ensembl"/>
</dbReference>
<dbReference type="GO" id="GO:0051607">
    <property type="term" value="P:defense response to virus"/>
    <property type="evidence" value="ECO:0007669"/>
    <property type="project" value="UniProtKB-KW"/>
</dbReference>
<dbReference type="GO" id="GO:0006954">
    <property type="term" value="P:inflammatory response"/>
    <property type="evidence" value="ECO:0007669"/>
    <property type="project" value="UniProtKB-KW"/>
</dbReference>
<dbReference type="GO" id="GO:0045087">
    <property type="term" value="P:innate immune response"/>
    <property type="evidence" value="ECO:0007669"/>
    <property type="project" value="UniProtKB-KW"/>
</dbReference>
<dbReference type="GO" id="GO:0032693">
    <property type="term" value="P:negative regulation of interleukin-10 production"/>
    <property type="evidence" value="ECO:0007669"/>
    <property type="project" value="Ensembl"/>
</dbReference>
<dbReference type="GO" id="GO:0042104">
    <property type="term" value="P:positive regulation of activated T cell proliferation"/>
    <property type="evidence" value="ECO:0007669"/>
    <property type="project" value="Ensembl"/>
</dbReference>
<dbReference type="GO" id="GO:0002230">
    <property type="term" value="P:positive regulation of defense response to virus by host"/>
    <property type="evidence" value="ECO:0000318"/>
    <property type="project" value="GO_Central"/>
</dbReference>
<dbReference type="GO" id="GO:0032725">
    <property type="term" value="P:positive regulation of granulocyte macrophage colony-stimulating factor production"/>
    <property type="evidence" value="ECO:0007669"/>
    <property type="project" value="Ensembl"/>
</dbReference>
<dbReference type="GO" id="GO:0032733">
    <property type="term" value="P:positive regulation of interleukin-10 production"/>
    <property type="evidence" value="ECO:0007669"/>
    <property type="project" value="Ensembl"/>
</dbReference>
<dbReference type="GO" id="GO:0032735">
    <property type="term" value="P:positive regulation of interleukin-12 production"/>
    <property type="evidence" value="ECO:0007669"/>
    <property type="project" value="Ensembl"/>
</dbReference>
<dbReference type="GO" id="GO:0032740">
    <property type="term" value="P:positive regulation of interleukin-17 production"/>
    <property type="evidence" value="ECO:0007669"/>
    <property type="project" value="Ensembl"/>
</dbReference>
<dbReference type="GO" id="GO:0043382">
    <property type="term" value="P:positive regulation of memory T cell differentiation"/>
    <property type="evidence" value="ECO:0007669"/>
    <property type="project" value="Ensembl"/>
</dbReference>
<dbReference type="GO" id="GO:0032819">
    <property type="term" value="P:positive regulation of natural killer cell proliferation"/>
    <property type="evidence" value="ECO:0007669"/>
    <property type="project" value="Ensembl"/>
</dbReference>
<dbReference type="GO" id="GO:0090023">
    <property type="term" value="P:positive regulation of neutrophil chemotaxis"/>
    <property type="evidence" value="ECO:0007669"/>
    <property type="project" value="Ensembl"/>
</dbReference>
<dbReference type="GO" id="GO:0051142">
    <property type="term" value="P:positive regulation of NK T cell proliferation"/>
    <property type="evidence" value="ECO:0007669"/>
    <property type="project" value="Ensembl"/>
</dbReference>
<dbReference type="GO" id="GO:0045672">
    <property type="term" value="P:positive regulation of osteoclast differentiation"/>
    <property type="evidence" value="ECO:0007669"/>
    <property type="project" value="Ensembl"/>
</dbReference>
<dbReference type="GO" id="GO:0001916">
    <property type="term" value="P:positive regulation of T cell mediated cytotoxicity"/>
    <property type="evidence" value="ECO:0007669"/>
    <property type="project" value="Ensembl"/>
</dbReference>
<dbReference type="GO" id="GO:0042102">
    <property type="term" value="P:positive regulation of T cell proliferation"/>
    <property type="evidence" value="ECO:0000318"/>
    <property type="project" value="GO_Central"/>
</dbReference>
<dbReference type="GO" id="GO:0002827">
    <property type="term" value="P:positive regulation of T-helper 1 type immune response"/>
    <property type="evidence" value="ECO:0000318"/>
    <property type="project" value="GO_Central"/>
</dbReference>
<dbReference type="GO" id="GO:2000330">
    <property type="term" value="P:positive regulation of T-helper 17 cell lineage commitment"/>
    <property type="evidence" value="ECO:0000318"/>
    <property type="project" value="GO_Central"/>
</dbReference>
<dbReference type="GO" id="GO:0045944">
    <property type="term" value="P:positive regulation of transcription by RNA polymerase II"/>
    <property type="evidence" value="ECO:0007669"/>
    <property type="project" value="Ensembl"/>
</dbReference>
<dbReference type="GO" id="GO:0032760">
    <property type="term" value="P:positive regulation of tumor necrosis factor production"/>
    <property type="evidence" value="ECO:0007669"/>
    <property type="project" value="Ensembl"/>
</dbReference>
<dbReference type="GO" id="GO:0032729">
    <property type="term" value="P:positive regulation of type II interferon production"/>
    <property type="evidence" value="ECO:0007669"/>
    <property type="project" value="Ensembl"/>
</dbReference>
<dbReference type="GO" id="GO:0042098">
    <property type="term" value="P:T cell proliferation"/>
    <property type="evidence" value="ECO:0007669"/>
    <property type="project" value="Ensembl"/>
</dbReference>
<dbReference type="GO" id="GO:0048771">
    <property type="term" value="P:tissue remodeling"/>
    <property type="evidence" value="ECO:0007669"/>
    <property type="project" value="UniProtKB-KW"/>
</dbReference>
<dbReference type="FunFam" id="1.20.1250.10:FF:000024">
    <property type="entry name" value="Interleukin-23 subunit alpha"/>
    <property type="match status" value="1"/>
</dbReference>
<dbReference type="Gene3D" id="1.20.1250.10">
    <property type="match status" value="1"/>
</dbReference>
<dbReference type="InterPro" id="IPR009079">
    <property type="entry name" value="4_helix_cytokine-like_core"/>
</dbReference>
<dbReference type="InterPro" id="IPR010831">
    <property type="entry name" value="IL-23_alpha"/>
</dbReference>
<dbReference type="PANTHER" id="PTHR15947:SF0">
    <property type="entry name" value="INTERLEUKIN-23 SUBUNIT ALPHA"/>
    <property type="match status" value="1"/>
</dbReference>
<dbReference type="PANTHER" id="PTHR15947">
    <property type="entry name" value="SGRF"/>
    <property type="match status" value="1"/>
</dbReference>
<dbReference type="Pfam" id="PF16649">
    <property type="entry name" value="IL23"/>
    <property type="match status" value="1"/>
</dbReference>
<dbReference type="SUPFAM" id="SSF47266">
    <property type="entry name" value="4-helical cytokines"/>
    <property type="match status" value="1"/>
</dbReference>
<evidence type="ECO:0000250" key="1"/>
<evidence type="ECO:0000250" key="2">
    <source>
        <dbReference type="UniProtKB" id="Q9NPF7"/>
    </source>
</evidence>
<evidence type="ECO:0000255" key="3"/>
<evidence type="ECO:0000305" key="4"/>
<sequence length="193" mass="21132">MLGSRAVMLMLLLLLLPWTSQGRAVPEGSSPAWAQGQQLSQQLCTLAWTAHLPMGHVDLPREEGDDETTSEVPHIQCGDGCDPQGLRDNSQSCLQRIHQGLVFYEKLLGSDIFTGEPSLHPDGSVGQLHASLLGLRQLLQPEGHHWETEQTPSPSPSQPWQRLLLRLKILRSLQAFVAVAARVFAHGAATLSQ</sequence>
<gene>
    <name type="primary">IL23A</name>
    <name type="synonym">SGRF</name>
</gene>
<proteinExistence type="inferred from homology"/>
<reference key="1">
    <citation type="submission" date="1999-07" db="EMBL/GenBank/DDBJ databases">
        <title>SGRF; a novel member of the IL-6/G-CSF family.</title>
        <authorList>
            <person name="Hirata Y."/>
            <person name="Kosuge Y."/>
        </authorList>
    </citation>
    <scope>NUCLEOTIDE SEQUENCE [GENOMIC DNA]</scope>
</reference>
<name>IL23A_PIG</name>
<feature type="signal peptide" evidence="3">
    <location>
        <begin position="1"/>
        <end position="22"/>
    </location>
</feature>
<feature type="chain" id="PRO_0000259490" description="Interleukin-23 subunit alpha">
    <location>
        <begin position="23"/>
        <end position="193"/>
    </location>
</feature>